<proteinExistence type="inferred from homology"/>
<name>RRF_BACFN</name>
<organism>
    <name type="scientific">Bacteroides fragilis (strain ATCC 25285 / DSM 2151 / CCUG 4856 / JCM 11019 / LMG 10263 / NCTC 9343 / Onslow / VPI 2553 / EN-2)</name>
    <dbReference type="NCBI Taxonomy" id="272559"/>
    <lineage>
        <taxon>Bacteria</taxon>
        <taxon>Pseudomonadati</taxon>
        <taxon>Bacteroidota</taxon>
        <taxon>Bacteroidia</taxon>
        <taxon>Bacteroidales</taxon>
        <taxon>Bacteroidaceae</taxon>
        <taxon>Bacteroides</taxon>
    </lineage>
</organism>
<sequence length="186" mass="20764">MVDVKTIIEESQEKMDMAVMYLEEALAHIRAGKASTRLLDGIRVDSYGSMVPISNVAAVTTPDARSITIKPWDKSMFRVIEKAIIDSDLGIMPENNGEIIRIGIPPLTEERRKQLAKQCKAEGETAKVSIRNARRDGIDALKKAVKDGLAEDEQKNAEAKLQKVHDKYIAKIEEMLAEKDKEIMTV</sequence>
<keyword id="KW-0963">Cytoplasm</keyword>
<keyword id="KW-0648">Protein biosynthesis</keyword>
<dbReference type="EMBL" id="CR626927">
    <property type="protein sequence ID" value="CAH06368.1"/>
    <property type="molecule type" value="Genomic_DNA"/>
</dbReference>
<dbReference type="RefSeq" id="WP_005775374.1">
    <property type="nucleotide sequence ID" value="NZ_UFTH01000001.1"/>
</dbReference>
<dbReference type="SMR" id="Q5LHL2"/>
<dbReference type="PaxDb" id="272559-BF9343_0589"/>
<dbReference type="GeneID" id="93106274"/>
<dbReference type="KEGG" id="bfs:BF9343_0589"/>
<dbReference type="eggNOG" id="COG0233">
    <property type="taxonomic scope" value="Bacteria"/>
</dbReference>
<dbReference type="HOGENOM" id="CLU_073981_2_0_10"/>
<dbReference type="Proteomes" id="UP000006731">
    <property type="component" value="Chromosome"/>
</dbReference>
<dbReference type="GO" id="GO:0005737">
    <property type="term" value="C:cytoplasm"/>
    <property type="evidence" value="ECO:0007669"/>
    <property type="project" value="UniProtKB-SubCell"/>
</dbReference>
<dbReference type="GO" id="GO:0043023">
    <property type="term" value="F:ribosomal large subunit binding"/>
    <property type="evidence" value="ECO:0007669"/>
    <property type="project" value="TreeGrafter"/>
</dbReference>
<dbReference type="GO" id="GO:0006415">
    <property type="term" value="P:translational termination"/>
    <property type="evidence" value="ECO:0007669"/>
    <property type="project" value="UniProtKB-UniRule"/>
</dbReference>
<dbReference type="CDD" id="cd00520">
    <property type="entry name" value="RRF"/>
    <property type="match status" value="1"/>
</dbReference>
<dbReference type="FunFam" id="1.10.132.20:FF:000001">
    <property type="entry name" value="Ribosome-recycling factor"/>
    <property type="match status" value="1"/>
</dbReference>
<dbReference type="FunFam" id="3.30.1360.40:FF:000001">
    <property type="entry name" value="Ribosome-recycling factor"/>
    <property type="match status" value="1"/>
</dbReference>
<dbReference type="Gene3D" id="3.30.1360.40">
    <property type="match status" value="1"/>
</dbReference>
<dbReference type="Gene3D" id="1.10.132.20">
    <property type="entry name" value="Ribosome-recycling factor"/>
    <property type="match status" value="1"/>
</dbReference>
<dbReference type="HAMAP" id="MF_00040">
    <property type="entry name" value="RRF"/>
    <property type="match status" value="1"/>
</dbReference>
<dbReference type="InterPro" id="IPR002661">
    <property type="entry name" value="Ribosome_recyc_fac"/>
</dbReference>
<dbReference type="InterPro" id="IPR023584">
    <property type="entry name" value="Ribosome_recyc_fac_dom"/>
</dbReference>
<dbReference type="InterPro" id="IPR036191">
    <property type="entry name" value="RRF_sf"/>
</dbReference>
<dbReference type="NCBIfam" id="TIGR00496">
    <property type="entry name" value="frr"/>
    <property type="match status" value="1"/>
</dbReference>
<dbReference type="PANTHER" id="PTHR20982:SF3">
    <property type="entry name" value="MITOCHONDRIAL RIBOSOME RECYCLING FACTOR PSEUDO 1"/>
    <property type="match status" value="1"/>
</dbReference>
<dbReference type="PANTHER" id="PTHR20982">
    <property type="entry name" value="RIBOSOME RECYCLING FACTOR"/>
    <property type="match status" value="1"/>
</dbReference>
<dbReference type="Pfam" id="PF01765">
    <property type="entry name" value="RRF"/>
    <property type="match status" value="1"/>
</dbReference>
<dbReference type="SUPFAM" id="SSF55194">
    <property type="entry name" value="Ribosome recycling factor, RRF"/>
    <property type="match status" value="1"/>
</dbReference>
<evidence type="ECO:0000255" key="1">
    <source>
        <dbReference type="HAMAP-Rule" id="MF_00040"/>
    </source>
</evidence>
<accession>Q5LHL2</accession>
<reference key="1">
    <citation type="journal article" date="2005" name="Science">
        <title>Extensive DNA inversions in the B. fragilis genome control variable gene expression.</title>
        <authorList>
            <person name="Cerdeno-Tarraga A.-M."/>
            <person name="Patrick S."/>
            <person name="Crossman L.C."/>
            <person name="Blakely G."/>
            <person name="Abratt V."/>
            <person name="Lennard N."/>
            <person name="Poxton I."/>
            <person name="Duerden B."/>
            <person name="Harris B."/>
            <person name="Quail M.A."/>
            <person name="Barron A."/>
            <person name="Clark L."/>
            <person name="Corton C."/>
            <person name="Doggett J."/>
            <person name="Holden M.T.G."/>
            <person name="Larke N."/>
            <person name="Line A."/>
            <person name="Lord A."/>
            <person name="Norbertczak H."/>
            <person name="Ormond D."/>
            <person name="Price C."/>
            <person name="Rabbinowitsch E."/>
            <person name="Woodward J."/>
            <person name="Barrell B.G."/>
            <person name="Parkhill J."/>
        </authorList>
    </citation>
    <scope>NUCLEOTIDE SEQUENCE [LARGE SCALE GENOMIC DNA]</scope>
    <source>
        <strain>ATCC 25285 / DSM 2151 / CCUG 4856 / JCM 11019 / LMG 10263 / NCTC 9343 / Onslow / VPI 2553 / EN-2</strain>
    </source>
</reference>
<protein>
    <recommendedName>
        <fullName evidence="1">Ribosome-recycling factor</fullName>
        <shortName evidence="1">RRF</shortName>
    </recommendedName>
    <alternativeName>
        <fullName evidence="1">Ribosome-releasing factor</fullName>
    </alternativeName>
</protein>
<comment type="function">
    <text evidence="1">Responsible for the release of ribosomes from messenger RNA at the termination of protein biosynthesis. May increase the efficiency of translation by recycling ribosomes from one round of translation to another.</text>
</comment>
<comment type="subcellular location">
    <subcellularLocation>
        <location evidence="1">Cytoplasm</location>
    </subcellularLocation>
</comment>
<comment type="similarity">
    <text evidence="1">Belongs to the RRF family.</text>
</comment>
<gene>
    <name evidence="1" type="primary">frr</name>
    <name type="ordered locus">BF0619</name>
</gene>
<feature type="chain" id="PRO_0000167406" description="Ribosome-recycling factor">
    <location>
        <begin position="1"/>
        <end position="186"/>
    </location>
</feature>